<feature type="chain" id="PRO_1000008426" description="Holo-[acyl-carrier-protein] synthase">
    <location>
        <begin position="1"/>
        <end position="118"/>
    </location>
</feature>
<feature type="binding site" evidence="1">
    <location>
        <position position="9"/>
    </location>
    <ligand>
        <name>Mg(2+)</name>
        <dbReference type="ChEBI" id="CHEBI:18420"/>
    </ligand>
</feature>
<feature type="binding site" evidence="1">
    <location>
        <position position="52"/>
    </location>
    <ligand>
        <name>Mg(2+)</name>
        <dbReference type="ChEBI" id="CHEBI:18420"/>
    </ligand>
</feature>
<dbReference type="EC" id="2.7.8.7" evidence="1"/>
<dbReference type="EMBL" id="CT573213">
    <property type="protein sequence ID" value="CAJ59784.1"/>
    <property type="molecule type" value="Genomic_DNA"/>
</dbReference>
<dbReference type="RefSeq" id="WP_011602327.1">
    <property type="nucleotide sequence ID" value="NC_008278.1"/>
</dbReference>
<dbReference type="SMR" id="Q0RRN3"/>
<dbReference type="STRING" id="326424.FRAAL1120"/>
<dbReference type="KEGG" id="fal:FRAAL1120"/>
<dbReference type="eggNOG" id="COG0736">
    <property type="taxonomic scope" value="Bacteria"/>
</dbReference>
<dbReference type="HOGENOM" id="CLU_089696_0_0_11"/>
<dbReference type="OrthoDB" id="517356at2"/>
<dbReference type="Proteomes" id="UP000000657">
    <property type="component" value="Chromosome"/>
</dbReference>
<dbReference type="GO" id="GO:0005737">
    <property type="term" value="C:cytoplasm"/>
    <property type="evidence" value="ECO:0007669"/>
    <property type="project" value="UniProtKB-SubCell"/>
</dbReference>
<dbReference type="GO" id="GO:0008897">
    <property type="term" value="F:holo-[acyl-carrier-protein] synthase activity"/>
    <property type="evidence" value="ECO:0007669"/>
    <property type="project" value="UniProtKB-UniRule"/>
</dbReference>
<dbReference type="GO" id="GO:0000287">
    <property type="term" value="F:magnesium ion binding"/>
    <property type="evidence" value="ECO:0007669"/>
    <property type="project" value="UniProtKB-UniRule"/>
</dbReference>
<dbReference type="GO" id="GO:0006633">
    <property type="term" value="P:fatty acid biosynthetic process"/>
    <property type="evidence" value="ECO:0007669"/>
    <property type="project" value="UniProtKB-UniRule"/>
</dbReference>
<dbReference type="Gene3D" id="3.90.470.20">
    <property type="entry name" value="4'-phosphopantetheinyl transferase domain"/>
    <property type="match status" value="1"/>
</dbReference>
<dbReference type="HAMAP" id="MF_00101">
    <property type="entry name" value="AcpS"/>
    <property type="match status" value="1"/>
</dbReference>
<dbReference type="InterPro" id="IPR008278">
    <property type="entry name" value="4-PPantetheinyl_Trfase_dom"/>
</dbReference>
<dbReference type="InterPro" id="IPR037143">
    <property type="entry name" value="4-PPantetheinyl_Trfase_dom_sf"/>
</dbReference>
<dbReference type="InterPro" id="IPR002582">
    <property type="entry name" value="ACPS"/>
</dbReference>
<dbReference type="InterPro" id="IPR004568">
    <property type="entry name" value="Ppantetheine-prot_Trfase_dom"/>
</dbReference>
<dbReference type="NCBIfam" id="TIGR00556">
    <property type="entry name" value="pantethn_trn"/>
    <property type="match status" value="1"/>
</dbReference>
<dbReference type="NCBIfam" id="NF000832">
    <property type="entry name" value="PRK00070.3-2"/>
    <property type="match status" value="1"/>
</dbReference>
<dbReference type="Pfam" id="PF01648">
    <property type="entry name" value="ACPS"/>
    <property type="match status" value="1"/>
</dbReference>
<dbReference type="SUPFAM" id="SSF56214">
    <property type="entry name" value="4'-phosphopantetheinyl transferase"/>
    <property type="match status" value="1"/>
</dbReference>
<proteinExistence type="inferred from homology"/>
<gene>
    <name evidence="1" type="primary">acpS</name>
    <name type="ordered locus">FRAAL1120</name>
</gene>
<comment type="function">
    <text evidence="1">Transfers the 4'-phosphopantetheine moiety from coenzyme A to a Ser of acyl-carrier-protein.</text>
</comment>
<comment type="catalytic activity">
    <reaction evidence="1">
        <text>apo-[ACP] + CoA = holo-[ACP] + adenosine 3',5'-bisphosphate + H(+)</text>
        <dbReference type="Rhea" id="RHEA:12068"/>
        <dbReference type="Rhea" id="RHEA-COMP:9685"/>
        <dbReference type="Rhea" id="RHEA-COMP:9690"/>
        <dbReference type="ChEBI" id="CHEBI:15378"/>
        <dbReference type="ChEBI" id="CHEBI:29999"/>
        <dbReference type="ChEBI" id="CHEBI:57287"/>
        <dbReference type="ChEBI" id="CHEBI:58343"/>
        <dbReference type="ChEBI" id="CHEBI:64479"/>
        <dbReference type="EC" id="2.7.8.7"/>
    </reaction>
</comment>
<comment type="cofactor">
    <cofactor evidence="1">
        <name>Mg(2+)</name>
        <dbReference type="ChEBI" id="CHEBI:18420"/>
    </cofactor>
</comment>
<comment type="subcellular location">
    <subcellularLocation>
        <location evidence="1">Cytoplasm</location>
    </subcellularLocation>
</comment>
<comment type="similarity">
    <text evidence="1">Belongs to the P-Pant transferase superfamily. AcpS family.</text>
</comment>
<evidence type="ECO:0000255" key="1">
    <source>
        <dbReference type="HAMAP-Rule" id="MF_00101"/>
    </source>
</evidence>
<accession>Q0RRN3</accession>
<sequence length="118" mass="12276">MAVVGVGVDVVDVDRFAATLSRTPGIAMRLFTPAERGLARPERLAARFAAKEAVAKVLGAPPGLEWHDAEVVLATGGRPSLRIRGTVAAAAQRLDIASWHLSLTHDGGVAIAMVVAES</sequence>
<reference key="1">
    <citation type="journal article" date="2007" name="Genome Res.">
        <title>Genome characteristics of facultatively symbiotic Frankia sp. strains reflect host range and host plant biogeography.</title>
        <authorList>
            <person name="Normand P."/>
            <person name="Lapierre P."/>
            <person name="Tisa L.S."/>
            <person name="Gogarten J.P."/>
            <person name="Alloisio N."/>
            <person name="Bagnarol E."/>
            <person name="Bassi C.A."/>
            <person name="Berry A.M."/>
            <person name="Bickhart D.M."/>
            <person name="Choisne N."/>
            <person name="Couloux A."/>
            <person name="Cournoyer B."/>
            <person name="Cruveiller S."/>
            <person name="Daubin V."/>
            <person name="Demange N."/>
            <person name="Francino M.P."/>
            <person name="Goltsman E."/>
            <person name="Huang Y."/>
            <person name="Kopp O.R."/>
            <person name="Labarre L."/>
            <person name="Lapidus A."/>
            <person name="Lavire C."/>
            <person name="Marechal J."/>
            <person name="Martinez M."/>
            <person name="Mastronunzio J.E."/>
            <person name="Mullin B.C."/>
            <person name="Niemann J."/>
            <person name="Pujic P."/>
            <person name="Rawnsley T."/>
            <person name="Rouy Z."/>
            <person name="Schenowitz C."/>
            <person name="Sellstedt A."/>
            <person name="Tavares F."/>
            <person name="Tomkins J.P."/>
            <person name="Vallenet D."/>
            <person name="Valverde C."/>
            <person name="Wall L.G."/>
            <person name="Wang Y."/>
            <person name="Medigue C."/>
            <person name="Benson D.R."/>
        </authorList>
    </citation>
    <scope>NUCLEOTIDE SEQUENCE [LARGE SCALE GENOMIC DNA]</scope>
    <source>
        <strain>DSM 45986 / CECT 9034 / ACN14a</strain>
    </source>
</reference>
<keyword id="KW-0963">Cytoplasm</keyword>
<keyword id="KW-0275">Fatty acid biosynthesis</keyword>
<keyword id="KW-0276">Fatty acid metabolism</keyword>
<keyword id="KW-0444">Lipid biosynthesis</keyword>
<keyword id="KW-0443">Lipid metabolism</keyword>
<keyword id="KW-0460">Magnesium</keyword>
<keyword id="KW-0479">Metal-binding</keyword>
<keyword id="KW-1185">Reference proteome</keyword>
<keyword id="KW-0808">Transferase</keyword>
<organism>
    <name type="scientific">Frankia alni (strain DSM 45986 / CECT 9034 / ACN14a)</name>
    <dbReference type="NCBI Taxonomy" id="326424"/>
    <lineage>
        <taxon>Bacteria</taxon>
        <taxon>Bacillati</taxon>
        <taxon>Actinomycetota</taxon>
        <taxon>Actinomycetes</taxon>
        <taxon>Frankiales</taxon>
        <taxon>Frankiaceae</taxon>
        <taxon>Frankia</taxon>
    </lineage>
</organism>
<protein>
    <recommendedName>
        <fullName evidence="1">Holo-[acyl-carrier-protein] synthase</fullName>
        <shortName evidence="1">Holo-ACP synthase</shortName>
        <ecNumber evidence="1">2.7.8.7</ecNumber>
    </recommendedName>
    <alternativeName>
        <fullName evidence="1">4'-phosphopantetheinyl transferase AcpS</fullName>
    </alternativeName>
</protein>
<name>ACPS_FRAAA</name>